<evidence type="ECO:0000255" key="1">
    <source>
        <dbReference type="HAMAP-Rule" id="MF_01702"/>
    </source>
</evidence>
<sequence length="260" mass="29388">MVKEKEKPKNEIIIETENLSLFYTDFKALNEINIKILKNSITALIGPSGCGKSTFLRTLNRMNDLVEGIKIEGNVIYEGKNIYSNNFDILELRRKIGMVFQTPNPFLMSIYDNISYGPKIHGTKDKKKLDEIVEQSLKKSALWDEVKDKLNTNALSLSGGQQQRLCIARTLAIEPNVILMDEPTSALDPISTGKIEELIINLKESYTIIIVTHNMQQAGRISDKTAFFLNGCIEEESPTDELFFNPKNTKTEEYISGKFG</sequence>
<protein>
    <recommendedName>
        <fullName evidence="1">Phosphate import ATP-binding protein PstB</fullName>
        <ecNumber evidence="1">7.3.2.1</ecNumber>
    </recommendedName>
    <alternativeName>
        <fullName evidence="1">ABC phosphate transporter</fullName>
    </alternativeName>
    <alternativeName>
        <fullName evidence="1">Phosphate-transporting ATPase</fullName>
    </alternativeName>
</protein>
<proteinExistence type="inferred from homology"/>
<dbReference type="EC" id="7.3.2.1" evidence="1"/>
<dbReference type="EMBL" id="CP000013">
    <property type="protein sequence ID" value="AAU07075.1"/>
    <property type="molecule type" value="Genomic_DNA"/>
</dbReference>
<dbReference type="RefSeq" id="WP_011193563.1">
    <property type="nucleotide sequence ID" value="NZ_CP028872.1"/>
</dbReference>
<dbReference type="SMR" id="Q662E6"/>
<dbReference type="GeneID" id="45161012"/>
<dbReference type="KEGG" id="bga:BG0221"/>
<dbReference type="eggNOG" id="COG1117">
    <property type="taxonomic scope" value="Bacteria"/>
</dbReference>
<dbReference type="HOGENOM" id="CLU_000604_1_22_12"/>
<dbReference type="OrthoDB" id="9805538at2"/>
<dbReference type="Proteomes" id="UP000002276">
    <property type="component" value="Chromosome"/>
</dbReference>
<dbReference type="GO" id="GO:0005886">
    <property type="term" value="C:plasma membrane"/>
    <property type="evidence" value="ECO:0007669"/>
    <property type="project" value="UniProtKB-SubCell"/>
</dbReference>
<dbReference type="GO" id="GO:0005524">
    <property type="term" value="F:ATP binding"/>
    <property type="evidence" value="ECO:0007669"/>
    <property type="project" value="UniProtKB-KW"/>
</dbReference>
<dbReference type="GO" id="GO:0016887">
    <property type="term" value="F:ATP hydrolysis activity"/>
    <property type="evidence" value="ECO:0007669"/>
    <property type="project" value="InterPro"/>
</dbReference>
<dbReference type="GO" id="GO:0015415">
    <property type="term" value="F:ATPase-coupled phosphate ion transmembrane transporter activity"/>
    <property type="evidence" value="ECO:0007669"/>
    <property type="project" value="UniProtKB-EC"/>
</dbReference>
<dbReference type="GO" id="GO:0035435">
    <property type="term" value="P:phosphate ion transmembrane transport"/>
    <property type="evidence" value="ECO:0007669"/>
    <property type="project" value="InterPro"/>
</dbReference>
<dbReference type="CDD" id="cd03260">
    <property type="entry name" value="ABC_PstB_phosphate_transporter"/>
    <property type="match status" value="1"/>
</dbReference>
<dbReference type="Gene3D" id="3.40.50.300">
    <property type="entry name" value="P-loop containing nucleotide triphosphate hydrolases"/>
    <property type="match status" value="1"/>
</dbReference>
<dbReference type="InterPro" id="IPR003593">
    <property type="entry name" value="AAA+_ATPase"/>
</dbReference>
<dbReference type="InterPro" id="IPR003439">
    <property type="entry name" value="ABC_transporter-like_ATP-bd"/>
</dbReference>
<dbReference type="InterPro" id="IPR017871">
    <property type="entry name" value="ABC_transporter-like_CS"/>
</dbReference>
<dbReference type="InterPro" id="IPR027417">
    <property type="entry name" value="P-loop_NTPase"/>
</dbReference>
<dbReference type="InterPro" id="IPR005670">
    <property type="entry name" value="PstB-like"/>
</dbReference>
<dbReference type="NCBIfam" id="TIGR00972">
    <property type="entry name" value="3a0107s01c2"/>
    <property type="match status" value="1"/>
</dbReference>
<dbReference type="PANTHER" id="PTHR43423">
    <property type="entry name" value="ABC TRANSPORTER I FAMILY MEMBER 17"/>
    <property type="match status" value="1"/>
</dbReference>
<dbReference type="PANTHER" id="PTHR43423:SF1">
    <property type="entry name" value="ABC TRANSPORTER I FAMILY MEMBER 17"/>
    <property type="match status" value="1"/>
</dbReference>
<dbReference type="Pfam" id="PF00005">
    <property type="entry name" value="ABC_tran"/>
    <property type="match status" value="1"/>
</dbReference>
<dbReference type="SMART" id="SM00382">
    <property type="entry name" value="AAA"/>
    <property type="match status" value="1"/>
</dbReference>
<dbReference type="SUPFAM" id="SSF52540">
    <property type="entry name" value="P-loop containing nucleoside triphosphate hydrolases"/>
    <property type="match status" value="1"/>
</dbReference>
<dbReference type="PROSITE" id="PS00211">
    <property type="entry name" value="ABC_TRANSPORTER_1"/>
    <property type="match status" value="1"/>
</dbReference>
<dbReference type="PROSITE" id="PS50893">
    <property type="entry name" value="ABC_TRANSPORTER_2"/>
    <property type="match status" value="1"/>
</dbReference>
<dbReference type="PROSITE" id="PS51238">
    <property type="entry name" value="PSTB"/>
    <property type="match status" value="1"/>
</dbReference>
<comment type="function">
    <text evidence="1">Part of the ABC transporter complex PstSACB involved in phosphate import. Responsible for energy coupling to the transport system.</text>
</comment>
<comment type="catalytic activity">
    <reaction evidence="1">
        <text>phosphate(out) + ATP + H2O = ADP + 2 phosphate(in) + H(+)</text>
        <dbReference type="Rhea" id="RHEA:24440"/>
        <dbReference type="ChEBI" id="CHEBI:15377"/>
        <dbReference type="ChEBI" id="CHEBI:15378"/>
        <dbReference type="ChEBI" id="CHEBI:30616"/>
        <dbReference type="ChEBI" id="CHEBI:43474"/>
        <dbReference type="ChEBI" id="CHEBI:456216"/>
        <dbReference type="EC" id="7.3.2.1"/>
    </reaction>
</comment>
<comment type="subunit">
    <text evidence="1">The complex is composed of two ATP-binding proteins (PstB), two transmembrane proteins (PstC and PstA) and a solute-binding protein (PstS).</text>
</comment>
<comment type="subcellular location">
    <subcellularLocation>
        <location evidence="1">Cell inner membrane</location>
        <topology evidence="1">Peripheral membrane protein</topology>
    </subcellularLocation>
</comment>
<comment type="similarity">
    <text evidence="1">Belongs to the ABC transporter superfamily. Phosphate importer (TC 3.A.1.7) family.</text>
</comment>
<keyword id="KW-0067">ATP-binding</keyword>
<keyword id="KW-0997">Cell inner membrane</keyword>
<keyword id="KW-1003">Cell membrane</keyword>
<keyword id="KW-0472">Membrane</keyword>
<keyword id="KW-0547">Nucleotide-binding</keyword>
<keyword id="KW-0592">Phosphate transport</keyword>
<keyword id="KW-1278">Translocase</keyword>
<keyword id="KW-0813">Transport</keyword>
<name>PSTB_BORGP</name>
<feature type="chain" id="PRO_0000092789" description="Phosphate import ATP-binding protein PstB">
    <location>
        <begin position="1"/>
        <end position="260"/>
    </location>
</feature>
<feature type="domain" description="ABC transporter" evidence="1">
    <location>
        <begin position="14"/>
        <end position="255"/>
    </location>
</feature>
<feature type="binding site" evidence="1">
    <location>
        <begin position="46"/>
        <end position="53"/>
    </location>
    <ligand>
        <name>ATP</name>
        <dbReference type="ChEBI" id="CHEBI:30616"/>
    </ligand>
</feature>
<organism>
    <name type="scientific">Borrelia garinii subsp. bavariensis (strain ATCC BAA-2496 / DSM 23469 / PBi)</name>
    <name type="common">Borreliella bavariensis</name>
    <dbReference type="NCBI Taxonomy" id="290434"/>
    <lineage>
        <taxon>Bacteria</taxon>
        <taxon>Pseudomonadati</taxon>
        <taxon>Spirochaetota</taxon>
        <taxon>Spirochaetia</taxon>
        <taxon>Spirochaetales</taxon>
        <taxon>Borreliaceae</taxon>
        <taxon>Borreliella</taxon>
    </lineage>
</organism>
<accession>Q662E6</accession>
<reference key="1">
    <citation type="journal article" date="2004" name="Nucleic Acids Res.">
        <title>Comparative analysis of the Borrelia garinii genome.</title>
        <authorList>
            <person name="Gloeckner G."/>
            <person name="Lehmann R."/>
            <person name="Romualdi A."/>
            <person name="Pradella S."/>
            <person name="Schulte-Spechtel U."/>
            <person name="Schilhabel M."/>
            <person name="Wilske B."/>
            <person name="Suehnel J."/>
            <person name="Platzer M."/>
        </authorList>
    </citation>
    <scope>NUCLEOTIDE SEQUENCE [LARGE SCALE GENOMIC DNA]</scope>
    <source>
        <strain>ATCC BAA-2496 / DSM 23469 / PBi</strain>
    </source>
</reference>
<gene>
    <name evidence="1" type="primary">pstB</name>
    <name type="ordered locus">BG0221</name>
</gene>